<dbReference type="EC" id="3.4.21.53" evidence="1"/>
<dbReference type="EMBL" id="CP000360">
    <property type="protein sequence ID" value="ABF41052.1"/>
    <property type="molecule type" value="Genomic_DNA"/>
</dbReference>
<dbReference type="RefSeq" id="WP_011522853.1">
    <property type="nucleotide sequence ID" value="NC_008009.1"/>
</dbReference>
<dbReference type="SMR" id="Q1IPZ8"/>
<dbReference type="STRING" id="204669.Acid345_2051"/>
<dbReference type="EnsemblBacteria" id="ABF41052">
    <property type="protein sequence ID" value="ABF41052"/>
    <property type="gene ID" value="Acid345_2051"/>
</dbReference>
<dbReference type="KEGG" id="aba:Acid345_2051"/>
<dbReference type="eggNOG" id="COG0466">
    <property type="taxonomic scope" value="Bacteria"/>
</dbReference>
<dbReference type="HOGENOM" id="CLU_004109_4_3_0"/>
<dbReference type="OrthoDB" id="9803599at2"/>
<dbReference type="Proteomes" id="UP000002432">
    <property type="component" value="Chromosome"/>
</dbReference>
<dbReference type="GO" id="GO:0005737">
    <property type="term" value="C:cytoplasm"/>
    <property type="evidence" value="ECO:0007669"/>
    <property type="project" value="UniProtKB-SubCell"/>
</dbReference>
<dbReference type="GO" id="GO:0005524">
    <property type="term" value="F:ATP binding"/>
    <property type="evidence" value="ECO:0007669"/>
    <property type="project" value="UniProtKB-UniRule"/>
</dbReference>
<dbReference type="GO" id="GO:0016887">
    <property type="term" value="F:ATP hydrolysis activity"/>
    <property type="evidence" value="ECO:0007669"/>
    <property type="project" value="UniProtKB-UniRule"/>
</dbReference>
<dbReference type="GO" id="GO:0004176">
    <property type="term" value="F:ATP-dependent peptidase activity"/>
    <property type="evidence" value="ECO:0007669"/>
    <property type="project" value="UniProtKB-UniRule"/>
</dbReference>
<dbReference type="GO" id="GO:0043565">
    <property type="term" value="F:sequence-specific DNA binding"/>
    <property type="evidence" value="ECO:0007669"/>
    <property type="project" value="UniProtKB-UniRule"/>
</dbReference>
<dbReference type="GO" id="GO:0004252">
    <property type="term" value="F:serine-type endopeptidase activity"/>
    <property type="evidence" value="ECO:0007669"/>
    <property type="project" value="UniProtKB-UniRule"/>
</dbReference>
<dbReference type="GO" id="GO:0034605">
    <property type="term" value="P:cellular response to heat"/>
    <property type="evidence" value="ECO:0007669"/>
    <property type="project" value="UniProtKB-UniRule"/>
</dbReference>
<dbReference type="GO" id="GO:0006515">
    <property type="term" value="P:protein quality control for misfolded or incompletely synthesized proteins"/>
    <property type="evidence" value="ECO:0007669"/>
    <property type="project" value="UniProtKB-UniRule"/>
</dbReference>
<dbReference type="CDD" id="cd19500">
    <property type="entry name" value="RecA-like_Lon"/>
    <property type="match status" value="1"/>
</dbReference>
<dbReference type="FunFam" id="1.20.5.5270:FF:000002">
    <property type="entry name" value="Lon protease homolog"/>
    <property type="match status" value="1"/>
</dbReference>
<dbReference type="FunFam" id="3.40.50.300:FF:000382">
    <property type="entry name" value="Lon protease homolog 2, peroxisomal"/>
    <property type="match status" value="1"/>
</dbReference>
<dbReference type="Gene3D" id="1.10.8.60">
    <property type="match status" value="1"/>
</dbReference>
<dbReference type="Gene3D" id="1.20.5.5270">
    <property type="match status" value="1"/>
</dbReference>
<dbReference type="Gene3D" id="1.20.58.1480">
    <property type="match status" value="1"/>
</dbReference>
<dbReference type="Gene3D" id="3.30.230.10">
    <property type="match status" value="1"/>
</dbReference>
<dbReference type="Gene3D" id="2.30.130.40">
    <property type="entry name" value="LON domain-like"/>
    <property type="match status" value="1"/>
</dbReference>
<dbReference type="Gene3D" id="3.40.50.300">
    <property type="entry name" value="P-loop containing nucleotide triphosphate hydrolases"/>
    <property type="match status" value="1"/>
</dbReference>
<dbReference type="HAMAP" id="MF_01973">
    <property type="entry name" value="lon_bact"/>
    <property type="match status" value="1"/>
</dbReference>
<dbReference type="InterPro" id="IPR003593">
    <property type="entry name" value="AAA+_ATPase"/>
</dbReference>
<dbReference type="InterPro" id="IPR003959">
    <property type="entry name" value="ATPase_AAA_core"/>
</dbReference>
<dbReference type="InterPro" id="IPR027543">
    <property type="entry name" value="Lon_bac"/>
</dbReference>
<dbReference type="InterPro" id="IPR004815">
    <property type="entry name" value="Lon_bac/euk-typ"/>
</dbReference>
<dbReference type="InterPro" id="IPR054594">
    <property type="entry name" value="Lon_lid"/>
</dbReference>
<dbReference type="InterPro" id="IPR008269">
    <property type="entry name" value="Lon_proteolytic"/>
</dbReference>
<dbReference type="InterPro" id="IPR027065">
    <property type="entry name" value="Lon_Prtase"/>
</dbReference>
<dbReference type="InterPro" id="IPR003111">
    <property type="entry name" value="Lon_prtase_N"/>
</dbReference>
<dbReference type="InterPro" id="IPR046336">
    <property type="entry name" value="Lon_prtase_N_sf"/>
</dbReference>
<dbReference type="InterPro" id="IPR027417">
    <property type="entry name" value="P-loop_NTPase"/>
</dbReference>
<dbReference type="InterPro" id="IPR008268">
    <property type="entry name" value="Peptidase_S16_AS"/>
</dbReference>
<dbReference type="InterPro" id="IPR015947">
    <property type="entry name" value="PUA-like_sf"/>
</dbReference>
<dbReference type="InterPro" id="IPR020568">
    <property type="entry name" value="Ribosomal_Su5_D2-typ_SF"/>
</dbReference>
<dbReference type="InterPro" id="IPR014721">
    <property type="entry name" value="Ribsml_uS5_D2-typ_fold_subgr"/>
</dbReference>
<dbReference type="NCBIfam" id="TIGR00763">
    <property type="entry name" value="lon"/>
    <property type="match status" value="1"/>
</dbReference>
<dbReference type="PANTHER" id="PTHR10046">
    <property type="entry name" value="ATP DEPENDENT LON PROTEASE FAMILY MEMBER"/>
    <property type="match status" value="1"/>
</dbReference>
<dbReference type="Pfam" id="PF00004">
    <property type="entry name" value="AAA"/>
    <property type="match status" value="1"/>
</dbReference>
<dbReference type="Pfam" id="PF05362">
    <property type="entry name" value="Lon_C"/>
    <property type="match status" value="1"/>
</dbReference>
<dbReference type="Pfam" id="PF22667">
    <property type="entry name" value="Lon_lid"/>
    <property type="match status" value="1"/>
</dbReference>
<dbReference type="Pfam" id="PF02190">
    <property type="entry name" value="LON_substr_bdg"/>
    <property type="match status" value="1"/>
</dbReference>
<dbReference type="PIRSF" id="PIRSF001174">
    <property type="entry name" value="Lon_proteas"/>
    <property type="match status" value="1"/>
</dbReference>
<dbReference type="PRINTS" id="PR00830">
    <property type="entry name" value="ENDOLAPTASE"/>
</dbReference>
<dbReference type="SMART" id="SM00382">
    <property type="entry name" value="AAA"/>
    <property type="match status" value="1"/>
</dbReference>
<dbReference type="SMART" id="SM00464">
    <property type="entry name" value="LON"/>
    <property type="match status" value="1"/>
</dbReference>
<dbReference type="SUPFAM" id="SSF52540">
    <property type="entry name" value="P-loop containing nucleoside triphosphate hydrolases"/>
    <property type="match status" value="1"/>
</dbReference>
<dbReference type="SUPFAM" id="SSF88697">
    <property type="entry name" value="PUA domain-like"/>
    <property type="match status" value="1"/>
</dbReference>
<dbReference type="SUPFAM" id="SSF54211">
    <property type="entry name" value="Ribosomal protein S5 domain 2-like"/>
    <property type="match status" value="1"/>
</dbReference>
<dbReference type="PROSITE" id="PS51787">
    <property type="entry name" value="LON_N"/>
    <property type="match status" value="1"/>
</dbReference>
<dbReference type="PROSITE" id="PS51786">
    <property type="entry name" value="LON_PROTEOLYTIC"/>
    <property type="match status" value="1"/>
</dbReference>
<dbReference type="PROSITE" id="PS01046">
    <property type="entry name" value="LON_SER"/>
    <property type="match status" value="1"/>
</dbReference>
<organism>
    <name type="scientific">Koribacter versatilis (strain Ellin345)</name>
    <dbReference type="NCBI Taxonomy" id="204669"/>
    <lineage>
        <taxon>Bacteria</taxon>
        <taxon>Pseudomonadati</taxon>
        <taxon>Acidobacteriota</taxon>
        <taxon>Terriglobia</taxon>
        <taxon>Terriglobales</taxon>
        <taxon>Candidatus Korobacteraceae</taxon>
        <taxon>Candidatus Korobacter</taxon>
    </lineage>
</organism>
<comment type="function">
    <text evidence="1">ATP-dependent serine protease that mediates the selective degradation of mutant and abnormal proteins as well as certain short-lived regulatory proteins. Required for cellular homeostasis and for survival from DNA damage and developmental changes induced by stress. Degrades polypeptides processively to yield small peptide fragments that are 5 to 10 amino acids long. Binds to DNA in a double-stranded, site-specific manner.</text>
</comment>
<comment type="catalytic activity">
    <reaction evidence="1">
        <text>Hydrolysis of proteins in presence of ATP.</text>
        <dbReference type="EC" id="3.4.21.53"/>
    </reaction>
</comment>
<comment type="subunit">
    <text evidence="1">Homohexamer. Organized in a ring with a central cavity.</text>
</comment>
<comment type="subcellular location">
    <subcellularLocation>
        <location evidence="1">Cytoplasm</location>
    </subcellularLocation>
</comment>
<comment type="induction">
    <text evidence="1">By heat shock.</text>
</comment>
<comment type="similarity">
    <text evidence="1">Belongs to the peptidase S16 family.</text>
</comment>
<sequence>MANEAHNIEHTDPEFRDDSADARTLPLLPVRDTVLFPHAVLPLTVGRESSVQLINSLGEDKTIVVVAQREARVDSPQPSDLFAIGSLAVVHKVVKMPNQSLFVFAEGLERVRVTEYVQLNPYMRATVETVPEAFPPKSAEIEALQRNVLTLFQQIVTGSPTLSDELSTVAMNIEEPGRLVDFVASSLPSLSTKDKQEILETADVQIRLDKINQHLAKELEVQQLRNKIQSEVQDRVQQTQREYYLREQLKAIQKELGEQDDSTRDADELREKVEAAGMPDDVKKEALKELGRLARMSPMAADYSVTRNYIEWLAVLPWQKSSGAGEIDIPKAKDILDEDHYDLQKVKDRILDYLSVRRLKPNMKGPILCFSGPPGVGKTSLGKSIARALGRKFVRISLGGVHDEAEIRGHRRTYIGALPGQIMQGIRRAETNDPVFMLDEIDKVGRDFRGDPSAALLEALDPEQNNSFRDNYLDVPFDLSKVLFITTANQLDPIPEPLRDRMEIIDLQGYSEEEKVHIAFRYLIPRQEEENGITKDMIEFSEEAVRRIIRHYTREAGVRNLERNIGTVCRKLARRIAEGKTEKLAVTPQTITEMLGGEKVRVDTEIAERTKRAGVVVGLAWTPAGGDILFVEATTMKGKGGFTMTGQLGDVMRESMQAALSWVKSNAGKLGIDEEFFEKHDIHIHVPAGAIPKDGPSAGVTMVTALVSLLTDKPLRPLTAMTGEITLSGNVLPIGGVKEKTLAAKRAGVKTIILPSENKMNMDEDLTPEQLQGIEVHYVKTIDEVLEIALPSNKAEEKQDARTRAEVLNEVPAV</sequence>
<gene>
    <name evidence="1" type="primary">lon</name>
    <name type="ordered locus">Acid345_2051</name>
</gene>
<keyword id="KW-0067">ATP-binding</keyword>
<keyword id="KW-0963">Cytoplasm</keyword>
<keyword id="KW-0378">Hydrolase</keyword>
<keyword id="KW-0547">Nucleotide-binding</keyword>
<keyword id="KW-0645">Protease</keyword>
<keyword id="KW-1185">Reference proteome</keyword>
<keyword id="KW-0720">Serine protease</keyword>
<keyword id="KW-0346">Stress response</keyword>
<accession>Q1IPZ8</accession>
<feature type="chain" id="PRO_0000396530" description="Lon protease">
    <location>
        <begin position="1"/>
        <end position="814"/>
    </location>
</feature>
<feature type="domain" description="Lon N-terminal" evidence="3">
    <location>
        <begin position="25"/>
        <end position="219"/>
    </location>
</feature>
<feature type="domain" description="Lon proteolytic" evidence="2">
    <location>
        <begin position="610"/>
        <end position="792"/>
    </location>
</feature>
<feature type="region of interest" description="Disordered" evidence="4">
    <location>
        <begin position="1"/>
        <end position="20"/>
    </location>
</feature>
<feature type="active site" evidence="1">
    <location>
        <position position="697"/>
    </location>
</feature>
<feature type="active site" evidence="1">
    <location>
        <position position="740"/>
    </location>
</feature>
<feature type="binding site" evidence="1">
    <location>
        <begin position="372"/>
        <end position="379"/>
    </location>
    <ligand>
        <name>ATP</name>
        <dbReference type="ChEBI" id="CHEBI:30616"/>
    </ligand>
</feature>
<protein>
    <recommendedName>
        <fullName evidence="1">Lon protease</fullName>
        <ecNumber evidence="1">3.4.21.53</ecNumber>
    </recommendedName>
    <alternativeName>
        <fullName evidence="1">ATP-dependent protease La</fullName>
    </alternativeName>
</protein>
<evidence type="ECO:0000255" key="1">
    <source>
        <dbReference type="HAMAP-Rule" id="MF_01973"/>
    </source>
</evidence>
<evidence type="ECO:0000255" key="2">
    <source>
        <dbReference type="PROSITE-ProRule" id="PRU01122"/>
    </source>
</evidence>
<evidence type="ECO:0000255" key="3">
    <source>
        <dbReference type="PROSITE-ProRule" id="PRU01123"/>
    </source>
</evidence>
<evidence type="ECO:0000256" key="4">
    <source>
        <dbReference type="SAM" id="MobiDB-lite"/>
    </source>
</evidence>
<reference key="1">
    <citation type="journal article" date="2009" name="Appl. Environ. Microbiol.">
        <title>Three genomes from the phylum Acidobacteria provide insight into the lifestyles of these microorganisms in soils.</title>
        <authorList>
            <person name="Ward N.L."/>
            <person name="Challacombe J.F."/>
            <person name="Janssen P.H."/>
            <person name="Henrissat B."/>
            <person name="Coutinho P.M."/>
            <person name="Wu M."/>
            <person name="Xie G."/>
            <person name="Haft D.H."/>
            <person name="Sait M."/>
            <person name="Badger J."/>
            <person name="Barabote R.D."/>
            <person name="Bradley B."/>
            <person name="Brettin T.S."/>
            <person name="Brinkac L.M."/>
            <person name="Bruce D."/>
            <person name="Creasy T."/>
            <person name="Daugherty S.C."/>
            <person name="Davidsen T.M."/>
            <person name="DeBoy R.T."/>
            <person name="Detter J.C."/>
            <person name="Dodson R.J."/>
            <person name="Durkin A.S."/>
            <person name="Ganapathy A."/>
            <person name="Gwinn-Giglio M."/>
            <person name="Han C.S."/>
            <person name="Khouri H."/>
            <person name="Kiss H."/>
            <person name="Kothari S.P."/>
            <person name="Madupu R."/>
            <person name="Nelson K.E."/>
            <person name="Nelson W.C."/>
            <person name="Paulsen I."/>
            <person name="Penn K."/>
            <person name="Ren Q."/>
            <person name="Rosovitz M.J."/>
            <person name="Selengut J.D."/>
            <person name="Shrivastava S."/>
            <person name="Sullivan S.A."/>
            <person name="Tapia R."/>
            <person name="Thompson L.S."/>
            <person name="Watkins K.L."/>
            <person name="Yang Q."/>
            <person name="Yu C."/>
            <person name="Zafar N."/>
            <person name="Zhou L."/>
            <person name="Kuske C.R."/>
        </authorList>
    </citation>
    <scope>NUCLEOTIDE SEQUENCE [LARGE SCALE GENOMIC DNA]</scope>
    <source>
        <strain>Ellin345</strain>
    </source>
</reference>
<name>LON_KORVE</name>
<proteinExistence type="inferred from homology"/>